<proteinExistence type="inferred from homology"/>
<evidence type="ECO:0000255" key="1">
    <source>
        <dbReference type="HAMAP-Rule" id="MF_01850"/>
    </source>
</evidence>
<accession>A4VJ19</accession>
<gene>
    <name evidence="1" type="primary">ttcA</name>
    <name type="ordered locus">PST_1276</name>
</gene>
<comment type="function">
    <text evidence="1">Catalyzes the ATP-dependent 2-thiolation of cytidine in position 32 of tRNA, to form 2-thiocytidine (s(2)C32). The sulfur atoms are provided by the cysteine/cysteine desulfurase (IscS) system.</text>
</comment>
<comment type="catalytic activity">
    <reaction evidence="1">
        <text>cytidine(32) in tRNA + S-sulfanyl-L-cysteinyl-[cysteine desulfurase] + AH2 + ATP = 2-thiocytidine(32) in tRNA + L-cysteinyl-[cysteine desulfurase] + A + AMP + diphosphate + H(+)</text>
        <dbReference type="Rhea" id="RHEA:57048"/>
        <dbReference type="Rhea" id="RHEA-COMP:10288"/>
        <dbReference type="Rhea" id="RHEA-COMP:12157"/>
        <dbReference type="Rhea" id="RHEA-COMP:12158"/>
        <dbReference type="Rhea" id="RHEA-COMP:14821"/>
        <dbReference type="ChEBI" id="CHEBI:13193"/>
        <dbReference type="ChEBI" id="CHEBI:15378"/>
        <dbReference type="ChEBI" id="CHEBI:17499"/>
        <dbReference type="ChEBI" id="CHEBI:29950"/>
        <dbReference type="ChEBI" id="CHEBI:30616"/>
        <dbReference type="ChEBI" id="CHEBI:33019"/>
        <dbReference type="ChEBI" id="CHEBI:61963"/>
        <dbReference type="ChEBI" id="CHEBI:82748"/>
        <dbReference type="ChEBI" id="CHEBI:141453"/>
        <dbReference type="ChEBI" id="CHEBI:456215"/>
    </reaction>
    <physiologicalReaction direction="left-to-right" evidence="1">
        <dbReference type="Rhea" id="RHEA:57049"/>
    </physiologicalReaction>
</comment>
<comment type="cofactor">
    <cofactor evidence="1">
        <name>Mg(2+)</name>
        <dbReference type="ChEBI" id="CHEBI:18420"/>
    </cofactor>
</comment>
<comment type="cofactor">
    <cofactor evidence="1">
        <name>[4Fe-4S] cluster</name>
        <dbReference type="ChEBI" id="CHEBI:49883"/>
    </cofactor>
    <text evidence="1">Binds 1 [4Fe-4S] cluster per subunit. The cluster is chelated by three Cys residues, the fourth Fe has a free coordination site that may bind a sulfur atom transferred from the persulfide of IscS.</text>
</comment>
<comment type="pathway">
    <text evidence="1">tRNA modification.</text>
</comment>
<comment type="subunit">
    <text evidence="1">Homodimer.</text>
</comment>
<comment type="subcellular location">
    <subcellularLocation>
        <location evidence="1">Cytoplasm</location>
    </subcellularLocation>
</comment>
<comment type="miscellaneous">
    <text evidence="1">The thiolation reaction likely consists of two steps: a first activation step by ATP to form an adenylated intermediate of the target base of tRNA, and a second nucleophilic substitution step of the sulfur (S) atom supplied by the hydrosulfide attached to the Fe-S cluster.</text>
</comment>
<comment type="similarity">
    <text evidence="1">Belongs to the TtcA family.</text>
</comment>
<organism>
    <name type="scientific">Stutzerimonas stutzeri (strain A1501)</name>
    <name type="common">Pseudomonas stutzeri</name>
    <dbReference type="NCBI Taxonomy" id="379731"/>
    <lineage>
        <taxon>Bacteria</taxon>
        <taxon>Pseudomonadati</taxon>
        <taxon>Pseudomonadota</taxon>
        <taxon>Gammaproteobacteria</taxon>
        <taxon>Pseudomonadales</taxon>
        <taxon>Pseudomonadaceae</taxon>
        <taxon>Stutzerimonas</taxon>
    </lineage>
</organism>
<feature type="chain" id="PRO_0000348802" description="tRNA-cytidine(32) 2-sulfurtransferase">
    <location>
        <begin position="1"/>
        <end position="274"/>
    </location>
</feature>
<feature type="short sequence motif" description="PP-loop motif" evidence="1">
    <location>
        <begin position="40"/>
        <end position="45"/>
    </location>
</feature>
<feature type="binding site" evidence="1">
    <location>
        <position position="115"/>
    </location>
    <ligand>
        <name>[4Fe-4S] cluster</name>
        <dbReference type="ChEBI" id="CHEBI:49883"/>
    </ligand>
</feature>
<feature type="binding site" evidence="1">
    <location>
        <position position="118"/>
    </location>
    <ligand>
        <name>[4Fe-4S] cluster</name>
        <dbReference type="ChEBI" id="CHEBI:49883"/>
    </ligand>
</feature>
<feature type="binding site" evidence="1">
    <location>
        <position position="206"/>
    </location>
    <ligand>
        <name>[4Fe-4S] cluster</name>
        <dbReference type="ChEBI" id="CHEBI:49883"/>
    </ligand>
</feature>
<reference key="1">
    <citation type="journal article" date="2008" name="Proc. Natl. Acad. Sci. U.S.A.">
        <title>Nitrogen fixation island and rhizosphere competence traits in the genome of root-associated Pseudomonas stutzeri A1501.</title>
        <authorList>
            <person name="Yan Y."/>
            <person name="Yang J."/>
            <person name="Dou Y."/>
            <person name="Chen M."/>
            <person name="Ping S."/>
            <person name="Peng J."/>
            <person name="Lu W."/>
            <person name="Zhang W."/>
            <person name="Yao Z."/>
            <person name="Li H."/>
            <person name="Liu W."/>
            <person name="He S."/>
            <person name="Geng L."/>
            <person name="Zhang X."/>
            <person name="Yang F."/>
            <person name="Yu H."/>
            <person name="Zhan Y."/>
            <person name="Li D."/>
            <person name="Lin Z."/>
            <person name="Wang Y."/>
            <person name="Elmerich C."/>
            <person name="Lin M."/>
            <person name="Jin Q."/>
        </authorList>
    </citation>
    <scope>NUCLEOTIDE SEQUENCE [LARGE SCALE GENOMIC DNA]</scope>
    <source>
        <strain>A1501</strain>
    </source>
</reference>
<name>TTCA_STUS1</name>
<keyword id="KW-0004">4Fe-4S</keyword>
<keyword id="KW-0067">ATP-binding</keyword>
<keyword id="KW-0963">Cytoplasm</keyword>
<keyword id="KW-0408">Iron</keyword>
<keyword id="KW-0411">Iron-sulfur</keyword>
<keyword id="KW-0460">Magnesium</keyword>
<keyword id="KW-0479">Metal-binding</keyword>
<keyword id="KW-0547">Nucleotide-binding</keyword>
<keyword id="KW-1185">Reference proteome</keyword>
<keyword id="KW-0694">RNA-binding</keyword>
<keyword id="KW-0808">Transferase</keyword>
<keyword id="KW-0819">tRNA processing</keyword>
<keyword id="KW-0820">tRNA-binding</keyword>
<dbReference type="EC" id="2.8.1.-" evidence="1"/>
<dbReference type="EMBL" id="CP000304">
    <property type="protein sequence ID" value="ABP78970.1"/>
    <property type="molecule type" value="Genomic_DNA"/>
</dbReference>
<dbReference type="RefSeq" id="WP_011912455.1">
    <property type="nucleotide sequence ID" value="NC_009434.1"/>
</dbReference>
<dbReference type="SMR" id="A4VJ19"/>
<dbReference type="GeneID" id="66820449"/>
<dbReference type="KEGG" id="psa:PST_1276"/>
<dbReference type="eggNOG" id="COG0037">
    <property type="taxonomic scope" value="Bacteria"/>
</dbReference>
<dbReference type="HOGENOM" id="CLU_026481_0_0_6"/>
<dbReference type="Proteomes" id="UP000000233">
    <property type="component" value="Chromosome"/>
</dbReference>
<dbReference type="GO" id="GO:0005737">
    <property type="term" value="C:cytoplasm"/>
    <property type="evidence" value="ECO:0007669"/>
    <property type="project" value="UniProtKB-SubCell"/>
</dbReference>
<dbReference type="GO" id="GO:0051539">
    <property type="term" value="F:4 iron, 4 sulfur cluster binding"/>
    <property type="evidence" value="ECO:0007669"/>
    <property type="project" value="UniProtKB-UniRule"/>
</dbReference>
<dbReference type="GO" id="GO:0005524">
    <property type="term" value="F:ATP binding"/>
    <property type="evidence" value="ECO:0007669"/>
    <property type="project" value="UniProtKB-UniRule"/>
</dbReference>
<dbReference type="GO" id="GO:0000287">
    <property type="term" value="F:magnesium ion binding"/>
    <property type="evidence" value="ECO:0007669"/>
    <property type="project" value="UniProtKB-UniRule"/>
</dbReference>
<dbReference type="GO" id="GO:0016783">
    <property type="term" value="F:sulfurtransferase activity"/>
    <property type="evidence" value="ECO:0007669"/>
    <property type="project" value="UniProtKB-UniRule"/>
</dbReference>
<dbReference type="GO" id="GO:0000049">
    <property type="term" value="F:tRNA binding"/>
    <property type="evidence" value="ECO:0007669"/>
    <property type="project" value="UniProtKB-KW"/>
</dbReference>
<dbReference type="GO" id="GO:0034227">
    <property type="term" value="P:tRNA thio-modification"/>
    <property type="evidence" value="ECO:0007669"/>
    <property type="project" value="UniProtKB-UniRule"/>
</dbReference>
<dbReference type="CDD" id="cd24138">
    <property type="entry name" value="TtcA-like"/>
    <property type="match status" value="1"/>
</dbReference>
<dbReference type="Gene3D" id="3.40.50.620">
    <property type="entry name" value="HUPs"/>
    <property type="match status" value="1"/>
</dbReference>
<dbReference type="HAMAP" id="MF_01850">
    <property type="entry name" value="TtcA"/>
    <property type="match status" value="1"/>
</dbReference>
<dbReference type="InterPro" id="IPR014729">
    <property type="entry name" value="Rossmann-like_a/b/a_fold"/>
</dbReference>
<dbReference type="InterPro" id="IPR011063">
    <property type="entry name" value="TilS/TtcA_N"/>
</dbReference>
<dbReference type="InterPro" id="IPR012089">
    <property type="entry name" value="tRNA_Cyd_32_2_STrfase"/>
</dbReference>
<dbReference type="InterPro" id="IPR035107">
    <property type="entry name" value="tRNA_thiolation_TtcA_Ctu1"/>
</dbReference>
<dbReference type="NCBIfam" id="NF007972">
    <property type="entry name" value="PRK10696.1"/>
    <property type="match status" value="1"/>
</dbReference>
<dbReference type="PANTHER" id="PTHR43686:SF1">
    <property type="entry name" value="AMINOTRAN_5 DOMAIN-CONTAINING PROTEIN"/>
    <property type="match status" value="1"/>
</dbReference>
<dbReference type="PANTHER" id="PTHR43686">
    <property type="entry name" value="SULFURTRANSFERASE-RELATED"/>
    <property type="match status" value="1"/>
</dbReference>
<dbReference type="Pfam" id="PF01171">
    <property type="entry name" value="ATP_bind_3"/>
    <property type="match status" value="1"/>
</dbReference>
<dbReference type="PIRSF" id="PIRSF004976">
    <property type="entry name" value="ATPase_YdaO"/>
    <property type="match status" value="1"/>
</dbReference>
<dbReference type="SUPFAM" id="SSF52402">
    <property type="entry name" value="Adenine nucleotide alpha hydrolases-like"/>
    <property type="match status" value="1"/>
</dbReference>
<protein>
    <recommendedName>
        <fullName evidence="1">tRNA-cytidine(32) 2-sulfurtransferase</fullName>
        <ecNumber evidence="1">2.8.1.-</ecNumber>
    </recommendedName>
    <alternativeName>
        <fullName evidence="1">Two-thiocytidine biosynthesis protein A</fullName>
    </alternativeName>
    <alternativeName>
        <fullName evidence="1">tRNA 2-thiocytidine biosynthesis protein TtcA</fullName>
    </alternativeName>
</protein>
<sequence length="274" mass="31185">MGNLSVNQNKLQKRLRRLAGEAVTDFNMIEDGDKVMVCLSGGKDSYTMLDVLLYLQKVAPIRFEVVAVNMDQKQPGFPEHVLPEYLKSIGVEYHIIEKDTYSVVKEKIPEGKTTCSLCSRLRRGTLYTFADEIGATKMALGHHRDDILETFFLNMFYGGTLKAMPPKLLSDDGRNVVIRPLAYCSEADIEAYSKMKEFPIIPCNLCGSQENLQRQVVKEMLQEWERKSPGRTEIMFRALQNVVPSQLADRNLFDFKSLRIDDSATPRFVDVMSL</sequence>